<dbReference type="EC" id="3.6.4.-" evidence="1"/>
<dbReference type="EMBL" id="AM295250">
    <property type="protein sequence ID" value="CAL28159.1"/>
    <property type="molecule type" value="Genomic_DNA"/>
</dbReference>
<dbReference type="RefSeq" id="WP_015900499.1">
    <property type="nucleotide sequence ID" value="NC_012121.1"/>
</dbReference>
<dbReference type="SMR" id="B9DNE4"/>
<dbReference type="GeneID" id="93793678"/>
<dbReference type="KEGG" id="sca:SCA_1252"/>
<dbReference type="eggNOG" id="COG2255">
    <property type="taxonomic scope" value="Bacteria"/>
</dbReference>
<dbReference type="HOGENOM" id="CLU_055599_1_0_9"/>
<dbReference type="OrthoDB" id="9804478at2"/>
<dbReference type="BioCyc" id="SCAR396513:SCA_RS06260-MONOMER"/>
<dbReference type="Proteomes" id="UP000000444">
    <property type="component" value="Chromosome"/>
</dbReference>
<dbReference type="GO" id="GO:0005737">
    <property type="term" value="C:cytoplasm"/>
    <property type="evidence" value="ECO:0007669"/>
    <property type="project" value="UniProtKB-SubCell"/>
</dbReference>
<dbReference type="GO" id="GO:0048476">
    <property type="term" value="C:Holliday junction resolvase complex"/>
    <property type="evidence" value="ECO:0007669"/>
    <property type="project" value="UniProtKB-UniRule"/>
</dbReference>
<dbReference type="GO" id="GO:0005524">
    <property type="term" value="F:ATP binding"/>
    <property type="evidence" value="ECO:0007669"/>
    <property type="project" value="UniProtKB-UniRule"/>
</dbReference>
<dbReference type="GO" id="GO:0016887">
    <property type="term" value="F:ATP hydrolysis activity"/>
    <property type="evidence" value="ECO:0007669"/>
    <property type="project" value="InterPro"/>
</dbReference>
<dbReference type="GO" id="GO:0000400">
    <property type="term" value="F:four-way junction DNA binding"/>
    <property type="evidence" value="ECO:0007669"/>
    <property type="project" value="UniProtKB-UniRule"/>
</dbReference>
<dbReference type="GO" id="GO:0009378">
    <property type="term" value="F:four-way junction helicase activity"/>
    <property type="evidence" value="ECO:0007669"/>
    <property type="project" value="InterPro"/>
</dbReference>
<dbReference type="GO" id="GO:0006310">
    <property type="term" value="P:DNA recombination"/>
    <property type="evidence" value="ECO:0007669"/>
    <property type="project" value="UniProtKB-UniRule"/>
</dbReference>
<dbReference type="GO" id="GO:0006281">
    <property type="term" value="P:DNA repair"/>
    <property type="evidence" value="ECO:0007669"/>
    <property type="project" value="UniProtKB-UniRule"/>
</dbReference>
<dbReference type="CDD" id="cd00009">
    <property type="entry name" value="AAA"/>
    <property type="match status" value="1"/>
</dbReference>
<dbReference type="Gene3D" id="1.10.8.60">
    <property type="match status" value="1"/>
</dbReference>
<dbReference type="Gene3D" id="3.40.50.300">
    <property type="entry name" value="P-loop containing nucleotide triphosphate hydrolases"/>
    <property type="match status" value="1"/>
</dbReference>
<dbReference type="Gene3D" id="1.10.10.10">
    <property type="entry name" value="Winged helix-like DNA-binding domain superfamily/Winged helix DNA-binding domain"/>
    <property type="match status" value="1"/>
</dbReference>
<dbReference type="HAMAP" id="MF_00016">
    <property type="entry name" value="DNA_HJ_migration_RuvB"/>
    <property type="match status" value="1"/>
</dbReference>
<dbReference type="InterPro" id="IPR003593">
    <property type="entry name" value="AAA+_ATPase"/>
</dbReference>
<dbReference type="InterPro" id="IPR041445">
    <property type="entry name" value="AAA_lid_4"/>
</dbReference>
<dbReference type="InterPro" id="IPR004605">
    <property type="entry name" value="DNA_helicase_Holl-junc_RuvB"/>
</dbReference>
<dbReference type="InterPro" id="IPR027417">
    <property type="entry name" value="P-loop_NTPase"/>
</dbReference>
<dbReference type="InterPro" id="IPR008824">
    <property type="entry name" value="RuvB-like_N"/>
</dbReference>
<dbReference type="InterPro" id="IPR008823">
    <property type="entry name" value="RuvB_C"/>
</dbReference>
<dbReference type="InterPro" id="IPR036388">
    <property type="entry name" value="WH-like_DNA-bd_sf"/>
</dbReference>
<dbReference type="InterPro" id="IPR036390">
    <property type="entry name" value="WH_DNA-bd_sf"/>
</dbReference>
<dbReference type="NCBIfam" id="NF000868">
    <property type="entry name" value="PRK00080.1"/>
    <property type="match status" value="1"/>
</dbReference>
<dbReference type="NCBIfam" id="TIGR00635">
    <property type="entry name" value="ruvB"/>
    <property type="match status" value="1"/>
</dbReference>
<dbReference type="PANTHER" id="PTHR42848">
    <property type="match status" value="1"/>
</dbReference>
<dbReference type="PANTHER" id="PTHR42848:SF1">
    <property type="entry name" value="HOLLIDAY JUNCTION BRANCH MIGRATION COMPLEX SUBUNIT RUVB"/>
    <property type="match status" value="1"/>
</dbReference>
<dbReference type="Pfam" id="PF17864">
    <property type="entry name" value="AAA_lid_4"/>
    <property type="match status" value="1"/>
</dbReference>
<dbReference type="Pfam" id="PF05491">
    <property type="entry name" value="RuvB_C"/>
    <property type="match status" value="1"/>
</dbReference>
<dbReference type="Pfam" id="PF05496">
    <property type="entry name" value="RuvB_N"/>
    <property type="match status" value="1"/>
</dbReference>
<dbReference type="SMART" id="SM00382">
    <property type="entry name" value="AAA"/>
    <property type="match status" value="1"/>
</dbReference>
<dbReference type="SUPFAM" id="SSF52540">
    <property type="entry name" value="P-loop containing nucleoside triphosphate hydrolases"/>
    <property type="match status" value="1"/>
</dbReference>
<dbReference type="SUPFAM" id="SSF46785">
    <property type="entry name" value="Winged helix' DNA-binding domain"/>
    <property type="match status" value="1"/>
</dbReference>
<sequence>MDDRMVDQSQHEDESSFELSLRPHFLKQYIGQASIKSNLEVFIKAAKLREEPLDHVLLFGPPGLGKTTLSNIIANEMNVNIRTVTGPAIERPGDLAAILSGLQPGDVLFIDEIHRLSSVVEEVLYPAMEDFYLDIVIGKGEEARSIRIDLPPFTLVGATTRAGSLTGPLRDRFGVHLRLEYYKESELKDIIIRTAEVLNTEIDEESAVELAKRSRGTPRIANRLLKRVRDFQQVNEDDMIYIETTKRALQLLQVDDYGLDYIDHKMMSCIINQYNGGPVGLDTIAVSIGEERITIEDVYEPFLIQKGFLERTPRGRKATPLAYEHFEAKNGKRDNFEY</sequence>
<proteinExistence type="inferred from homology"/>
<name>RUVB_STACT</name>
<comment type="function">
    <text evidence="1">The RuvA-RuvB-RuvC complex processes Holliday junction (HJ) DNA during genetic recombination and DNA repair, while the RuvA-RuvB complex plays an important role in the rescue of blocked DNA replication forks via replication fork reversal (RFR). RuvA specifically binds to HJ cruciform DNA, conferring on it an open structure. The RuvB hexamer acts as an ATP-dependent pump, pulling dsDNA into and through the RuvAB complex. RuvB forms 2 homohexamers on either side of HJ DNA bound by 1 or 2 RuvA tetramers; 4 subunits per hexamer contact DNA at a time. Coordinated motions by a converter formed by DNA-disengaged RuvB subunits stimulates ATP hydrolysis and nucleotide exchange. Immobilization of the converter enables RuvB to convert the ATP-contained energy into a lever motion, pulling 2 nucleotides of DNA out of the RuvA tetramer per ATP hydrolyzed, thus driving DNA branch migration. The RuvB motors rotate together with the DNA substrate, which together with the progressing nucleotide cycle form the mechanistic basis for DNA recombination by continuous HJ branch migration. Branch migration allows RuvC to scan DNA until it finds its consensus sequence, where it cleaves and resolves cruciform DNA.</text>
</comment>
<comment type="catalytic activity">
    <reaction evidence="1">
        <text>ATP + H2O = ADP + phosphate + H(+)</text>
        <dbReference type="Rhea" id="RHEA:13065"/>
        <dbReference type="ChEBI" id="CHEBI:15377"/>
        <dbReference type="ChEBI" id="CHEBI:15378"/>
        <dbReference type="ChEBI" id="CHEBI:30616"/>
        <dbReference type="ChEBI" id="CHEBI:43474"/>
        <dbReference type="ChEBI" id="CHEBI:456216"/>
    </reaction>
</comment>
<comment type="subunit">
    <text evidence="1">Homohexamer. Forms an RuvA(8)-RuvB(12)-Holliday junction (HJ) complex. HJ DNA is sandwiched between 2 RuvA tetramers; dsDNA enters through RuvA and exits via RuvB. An RuvB hexamer assembles on each DNA strand where it exits the tetramer. Each RuvB hexamer is contacted by two RuvA subunits (via domain III) on 2 adjacent RuvB subunits; this complex drives branch migration. In the full resolvosome a probable DNA-RuvA(4)-RuvB(12)-RuvC(2) complex forms which resolves the HJ.</text>
</comment>
<comment type="subcellular location">
    <subcellularLocation>
        <location evidence="1">Cytoplasm</location>
    </subcellularLocation>
</comment>
<comment type="domain">
    <text evidence="1">Has 3 domains, the large (RuvB-L) and small ATPase (RuvB-S) domains and the C-terminal head (RuvB-H) domain. The head domain binds DNA, while the ATPase domains jointly bind ATP, ADP or are empty depending on the state of the subunit in the translocation cycle. During a single DNA translocation step the structure of each domain remains the same, but their relative positions change.</text>
</comment>
<comment type="similarity">
    <text evidence="1">Belongs to the RuvB family.</text>
</comment>
<organism>
    <name type="scientific">Staphylococcus carnosus (strain TM300)</name>
    <dbReference type="NCBI Taxonomy" id="396513"/>
    <lineage>
        <taxon>Bacteria</taxon>
        <taxon>Bacillati</taxon>
        <taxon>Bacillota</taxon>
        <taxon>Bacilli</taxon>
        <taxon>Bacillales</taxon>
        <taxon>Staphylococcaceae</taxon>
        <taxon>Staphylococcus</taxon>
    </lineage>
</organism>
<feature type="chain" id="PRO_1000116656" description="Holliday junction branch migration complex subunit RuvB">
    <location>
        <begin position="1"/>
        <end position="338"/>
    </location>
</feature>
<feature type="region of interest" description="Large ATPase domain (RuvB-L)" evidence="1">
    <location>
        <begin position="1"/>
        <end position="182"/>
    </location>
</feature>
<feature type="region of interest" description="Small ATPAse domain (RuvB-S)" evidence="1">
    <location>
        <begin position="183"/>
        <end position="253"/>
    </location>
</feature>
<feature type="region of interest" description="Head domain (RuvB-H)" evidence="1">
    <location>
        <begin position="256"/>
        <end position="338"/>
    </location>
</feature>
<feature type="binding site" evidence="1">
    <location>
        <position position="21"/>
    </location>
    <ligand>
        <name>ATP</name>
        <dbReference type="ChEBI" id="CHEBI:30616"/>
    </ligand>
</feature>
<feature type="binding site" evidence="1">
    <location>
        <position position="22"/>
    </location>
    <ligand>
        <name>ATP</name>
        <dbReference type="ChEBI" id="CHEBI:30616"/>
    </ligand>
</feature>
<feature type="binding site" evidence="1">
    <location>
        <position position="63"/>
    </location>
    <ligand>
        <name>ATP</name>
        <dbReference type="ChEBI" id="CHEBI:30616"/>
    </ligand>
</feature>
<feature type="binding site" evidence="1">
    <location>
        <position position="66"/>
    </location>
    <ligand>
        <name>ATP</name>
        <dbReference type="ChEBI" id="CHEBI:30616"/>
    </ligand>
</feature>
<feature type="binding site" evidence="1">
    <location>
        <position position="67"/>
    </location>
    <ligand>
        <name>ATP</name>
        <dbReference type="ChEBI" id="CHEBI:30616"/>
    </ligand>
</feature>
<feature type="binding site" evidence="1">
    <location>
        <position position="67"/>
    </location>
    <ligand>
        <name>Mg(2+)</name>
        <dbReference type="ChEBI" id="CHEBI:18420"/>
    </ligand>
</feature>
<feature type="binding site" evidence="1">
    <location>
        <position position="68"/>
    </location>
    <ligand>
        <name>ATP</name>
        <dbReference type="ChEBI" id="CHEBI:30616"/>
    </ligand>
</feature>
<feature type="binding site" evidence="1">
    <location>
        <begin position="129"/>
        <end position="131"/>
    </location>
    <ligand>
        <name>ATP</name>
        <dbReference type="ChEBI" id="CHEBI:30616"/>
    </ligand>
</feature>
<feature type="binding site" evidence="1">
    <location>
        <position position="172"/>
    </location>
    <ligand>
        <name>ATP</name>
        <dbReference type="ChEBI" id="CHEBI:30616"/>
    </ligand>
</feature>
<feature type="binding site" evidence="1">
    <location>
        <position position="182"/>
    </location>
    <ligand>
        <name>ATP</name>
        <dbReference type="ChEBI" id="CHEBI:30616"/>
    </ligand>
</feature>
<feature type="binding site" evidence="1">
    <location>
        <position position="219"/>
    </location>
    <ligand>
        <name>ATP</name>
        <dbReference type="ChEBI" id="CHEBI:30616"/>
    </ligand>
</feature>
<feature type="binding site" evidence="1">
    <location>
        <position position="292"/>
    </location>
    <ligand>
        <name>DNA</name>
        <dbReference type="ChEBI" id="CHEBI:16991"/>
    </ligand>
</feature>
<feature type="binding site" evidence="1">
    <location>
        <position position="311"/>
    </location>
    <ligand>
        <name>DNA</name>
        <dbReference type="ChEBI" id="CHEBI:16991"/>
    </ligand>
</feature>
<feature type="binding site" evidence="1">
    <location>
        <position position="316"/>
    </location>
    <ligand>
        <name>DNA</name>
        <dbReference type="ChEBI" id="CHEBI:16991"/>
    </ligand>
</feature>
<keyword id="KW-0067">ATP-binding</keyword>
<keyword id="KW-0963">Cytoplasm</keyword>
<keyword id="KW-0227">DNA damage</keyword>
<keyword id="KW-0233">DNA recombination</keyword>
<keyword id="KW-0234">DNA repair</keyword>
<keyword id="KW-0238">DNA-binding</keyword>
<keyword id="KW-0378">Hydrolase</keyword>
<keyword id="KW-0547">Nucleotide-binding</keyword>
<keyword id="KW-1185">Reference proteome</keyword>
<reference key="1">
    <citation type="journal article" date="2009" name="Appl. Environ. Microbiol.">
        <title>Genome analysis of the meat starter culture bacterium Staphylococcus carnosus TM300.</title>
        <authorList>
            <person name="Rosenstein R."/>
            <person name="Nerz C."/>
            <person name="Biswas L."/>
            <person name="Resch A."/>
            <person name="Raddatz G."/>
            <person name="Schuster S.C."/>
            <person name="Goetz F."/>
        </authorList>
    </citation>
    <scope>NUCLEOTIDE SEQUENCE [LARGE SCALE GENOMIC DNA]</scope>
    <source>
        <strain>TM300</strain>
    </source>
</reference>
<protein>
    <recommendedName>
        <fullName evidence="1">Holliday junction branch migration complex subunit RuvB</fullName>
        <ecNumber evidence="1">3.6.4.-</ecNumber>
    </recommendedName>
</protein>
<gene>
    <name evidence="1" type="primary">ruvB</name>
    <name type="ordered locus">Sca_1252</name>
</gene>
<evidence type="ECO:0000255" key="1">
    <source>
        <dbReference type="HAMAP-Rule" id="MF_00016"/>
    </source>
</evidence>
<accession>B9DNE4</accession>